<protein>
    <recommendedName>
        <fullName>Orotidine 5'-phosphate decarboxylase</fullName>
        <ecNumber>4.1.1.23</ecNumber>
    </recommendedName>
    <alternativeName>
        <fullName>OMP decarboxylase</fullName>
        <shortName>OMPDCase</shortName>
        <shortName>OMPdecase</shortName>
    </alternativeName>
    <alternativeName>
        <fullName>Uridine 5'-monophosphate synthase</fullName>
        <shortName>UMP synthase</shortName>
    </alternativeName>
</protein>
<accession>Q9HF68</accession>
<organism>
    <name type="scientific">Solorina crocea</name>
    <dbReference type="NCBI Taxonomy" id="48864"/>
    <lineage>
        <taxon>Eukaryota</taxon>
        <taxon>Fungi</taxon>
        <taxon>Dikarya</taxon>
        <taxon>Ascomycota</taxon>
        <taxon>Pezizomycotina</taxon>
        <taxon>Lecanoromycetes</taxon>
        <taxon>OSLEUM clade</taxon>
        <taxon>Lecanoromycetidae</taxon>
        <taxon>Peltigerales</taxon>
        <taxon>Peltigerineae</taxon>
        <taxon>Peltigeraceae</taxon>
        <taxon>Solorina</taxon>
    </lineage>
</organism>
<dbReference type="EC" id="4.1.1.23"/>
<dbReference type="EMBL" id="AF206163">
    <property type="protein sequence ID" value="AAG34761.1"/>
    <property type="molecule type" value="Genomic_DNA"/>
</dbReference>
<dbReference type="SMR" id="Q9HF68"/>
<dbReference type="UniPathway" id="UPA00070">
    <property type="reaction ID" value="UER00120"/>
</dbReference>
<dbReference type="GO" id="GO:0004588">
    <property type="term" value="F:orotate phosphoribosyltransferase activity"/>
    <property type="evidence" value="ECO:0007669"/>
    <property type="project" value="TreeGrafter"/>
</dbReference>
<dbReference type="GO" id="GO:0004590">
    <property type="term" value="F:orotidine-5'-phosphate decarboxylase activity"/>
    <property type="evidence" value="ECO:0007669"/>
    <property type="project" value="UniProtKB-EC"/>
</dbReference>
<dbReference type="GO" id="GO:0006207">
    <property type="term" value="P:'de novo' pyrimidine nucleobase biosynthetic process"/>
    <property type="evidence" value="ECO:0007669"/>
    <property type="project" value="InterPro"/>
</dbReference>
<dbReference type="GO" id="GO:0044205">
    <property type="term" value="P:'de novo' UMP biosynthetic process"/>
    <property type="evidence" value="ECO:0007669"/>
    <property type="project" value="UniProtKB-UniPathway"/>
</dbReference>
<dbReference type="CDD" id="cd04725">
    <property type="entry name" value="OMP_decarboxylase_like"/>
    <property type="match status" value="1"/>
</dbReference>
<dbReference type="FunFam" id="3.20.20.70:FF:000114">
    <property type="entry name" value="Decarboxylase,orotidine phosphate"/>
    <property type="match status" value="1"/>
</dbReference>
<dbReference type="Gene3D" id="3.20.20.70">
    <property type="entry name" value="Aldolase class I"/>
    <property type="match status" value="1"/>
</dbReference>
<dbReference type="InterPro" id="IPR013785">
    <property type="entry name" value="Aldolase_TIM"/>
</dbReference>
<dbReference type="InterPro" id="IPR014732">
    <property type="entry name" value="OMPdecase"/>
</dbReference>
<dbReference type="InterPro" id="IPR018089">
    <property type="entry name" value="OMPdecase_AS"/>
</dbReference>
<dbReference type="InterPro" id="IPR001754">
    <property type="entry name" value="OMPdeCOase_dom"/>
</dbReference>
<dbReference type="InterPro" id="IPR011060">
    <property type="entry name" value="RibuloseP-bd_barrel"/>
</dbReference>
<dbReference type="NCBIfam" id="TIGR01740">
    <property type="entry name" value="pyrF"/>
    <property type="match status" value="1"/>
</dbReference>
<dbReference type="PANTHER" id="PTHR19278">
    <property type="entry name" value="OROTATE PHOSPHORIBOSYLTRANSFERASE"/>
    <property type="match status" value="1"/>
</dbReference>
<dbReference type="PANTHER" id="PTHR19278:SF9">
    <property type="entry name" value="URIDINE 5'-MONOPHOSPHATE SYNTHASE"/>
    <property type="match status" value="1"/>
</dbReference>
<dbReference type="Pfam" id="PF00215">
    <property type="entry name" value="OMPdecase"/>
    <property type="match status" value="1"/>
</dbReference>
<dbReference type="SMART" id="SM00934">
    <property type="entry name" value="OMPdecase"/>
    <property type="match status" value="1"/>
</dbReference>
<dbReference type="SUPFAM" id="SSF51366">
    <property type="entry name" value="Ribulose-phoshate binding barrel"/>
    <property type="match status" value="1"/>
</dbReference>
<dbReference type="PROSITE" id="PS00156">
    <property type="entry name" value="OMPDECASE"/>
    <property type="match status" value="1"/>
</dbReference>
<name>PYRF_SOLCC</name>
<reference key="1">
    <citation type="journal article" date="2000" name="Curr. Genet.">
        <title>Cloning and heterologous expression of Solorina crocea pyrG.</title>
        <authorList>
            <person name="Sinnemann S.J."/>
            <person name="Andresson O.S."/>
            <person name="Brown D.W."/>
            <person name="Miao V.P."/>
        </authorList>
    </citation>
    <scope>NUCLEOTIDE SEQUENCE [GENOMIC DNA]</scope>
</reference>
<evidence type="ECO:0000250" key="1"/>
<evidence type="ECO:0000255" key="2">
    <source>
        <dbReference type="PROSITE-ProRule" id="PRU10110"/>
    </source>
</evidence>
<evidence type="ECO:0000305" key="3"/>
<comment type="catalytic activity">
    <reaction evidence="2">
        <text>orotidine 5'-phosphate + H(+) = UMP + CO2</text>
        <dbReference type="Rhea" id="RHEA:11596"/>
        <dbReference type="ChEBI" id="CHEBI:15378"/>
        <dbReference type="ChEBI" id="CHEBI:16526"/>
        <dbReference type="ChEBI" id="CHEBI:57538"/>
        <dbReference type="ChEBI" id="CHEBI:57865"/>
        <dbReference type="EC" id="4.1.1.23"/>
    </reaction>
</comment>
<comment type="pathway">
    <text>Pyrimidine metabolism; UMP biosynthesis via de novo pathway; UMP from orotate: step 2/2.</text>
</comment>
<comment type="similarity">
    <text evidence="3">Belongs to the OMP decarboxylase family.</text>
</comment>
<feature type="chain" id="PRO_0000134684" description="Orotidine 5'-phosphate decarboxylase">
    <location>
        <begin position="1"/>
        <end position="280"/>
    </location>
</feature>
<feature type="active site" description="Proton donor" evidence="2">
    <location>
        <position position="95"/>
    </location>
</feature>
<feature type="binding site" evidence="1">
    <location>
        <position position="40"/>
    </location>
    <ligand>
        <name>substrate</name>
    </ligand>
</feature>
<feature type="binding site" evidence="1">
    <location>
        <begin position="62"/>
        <end position="64"/>
    </location>
    <ligand>
        <name>substrate</name>
    </ligand>
</feature>
<feature type="binding site" evidence="1">
    <location>
        <begin position="93"/>
        <end position="102"/>
    </location>
    <ligand>
        <name>substrate</name>
    </ligand>
</feature>
<feature type="binding site" evidence="1">
    <location>
        <position position="228"/>
    </location>
    <ligand>
        <name>substrate</name>
    </ligand>
</feature>
<feature type="binding site" evidence="1">
    <location>
        <position position="246"/>
    </location>
    <ligand>
        <name>substrate</name>
    </ligand>
</feature>
<sequence>MTSKSTLSYAERARQHDNPIARKLFEIAEAKKSNVVVSADLTTTKELLELADHLGPYIAVLKTHIDIVSDFNKETVFGLKSLSEKHNFLIFEDRKFVDIGNTVQKQYHGGALRISEWAHLVNASILAGDGIVEALAQTGTSDAFEHKGERGLLMLAEMTTRGTFATGAYTKASIESAKKHSSFVIGFISNQALTSIETQIPATHMEDFIVFTTGVNRATKGDPLGQQYQTPEAAIKRGADFIISGRGIYATSDPIQAAKLYQNEGWAAYETRIKNRSTGY</sequence>
<keyword id="KW-0210">Decarboxylase</keyword>
<keyword id="KW-0456">Lyase</keyword>
<keyword id="KW-0665">Pyrimidine biosynthesis</keyword>
<proteinExistence type="inferred from homology"/>
<gene>
    <name type="primary">PYRG</name>
</gene>